<keyword id="KW-0145">Chemotaxis</keyword>
<keyword id="KW-0378">Hydrolase</keyword>
<sequence length="226" mass="24792">MPARLDARATRRYFDSAFNSPAVKILPNEYYVTNGEDVMLSTVLGSCVAACIHDPVIGVGGMNHFMLPEGDIHSPASATMRYGAFAMEVLINELLKAGAVRERLEAKVFGGGAVLSAMQLMNIGERNGQFVLNYLKTEGIPVRAQDLGDVHARRINYFPRDGRVMVRKMAPHHQKAEALIAQREAAAAQTVQAETRAAPRVERFARPGGMRVERFDTPSRRDPVGA</sequence>
<evidence type="ECO:0000255" key="1">
    <source>
        <dbReference type="HAMAP-Rule" id="MF_01440"/>
    </source>
</evidence>
<evidence type="ECO:0000256" key="2">
    <source>
        <dbReference type="SAM" id="MobiDB-lite"/>
    </source>
</evidence>
<feature type="chain" id="PRO_0000251007" description="Probable chemoreceptor glutamine deamidase CheD">
    <location>
        <begin position="1"/>
        <end position="226"/>
    </location>
</feature>
<feature type="region of interest" description="Disordered" evidence="2">
    <location>
        <begin position="207"/>
        <end position="226"/>
    </location>
</feature>
<organism>
    <name type="scientific">Bordetella bronchiseptica (strain ATCC BAA-588 / NCTC 13252 / RB50)</name>
    <name type="common">Alcaligenes bronchisepticus</name>
    <dbReference type="NCBI Taxonomy" id="257310"/>
    <lineage>
        <taxon>Bacteria</taxon>
        <taxon>Pseudomonadati</taxon>
        <taxon>Pseudomonadota</taxon>
        <taxon>Betaproteobacteria</taxon>
        <taxon>Burkholderiales</taxon>
        <taxon>Alcaligenaceae</taxon>
        <taxon>Bordetella</taxon>
    </lineage>
</organism>
<comment type="function">
    <text evidence="1">Probably deamidates glutamine residues to glutamate on methyl-accepting chemotaxis receptors (MCPs), playing an important role in chemotaxis.</text>
</comment>
<comment type="catalytic activity">
    <reaction evidence="1">
        <text>L-glutaminyl-[protein] + H2O = L-glutamyl-[protein] + NH4(+)</text>
        <dbReference type="Rhea" id="RHEA:16441"/>
        <dbReference type="Rhea" id="RHEA-COMP:10207"/>
        <dbReference type="Rhea" id="RHEA-COMP:10208"/>
        <dbReference type="ChEBI" id="CHEBI:15377"/>
        <dbReference type="ChEBI" id="CHEBI:28938"/>
        <dbReference type="ChEBI" id="CHEBI:29973"/>
        <dbReference type="ChEBI" id="CHEBI:30011"/>
        <dbReference type="EC" id="3.5.1.44"/>
    </reaction>
</comment>
<comment type="similarity">
    <text evidence="1">Belongs to the CheD family.</text>
</comment>
<gene>
    <name evidence="1" type="primary">cheD</name>
    <name type="ordered locus">BB4451</name>
</gene>
<dbReference type="EC" id="3.5.1.44" evidence="1"/>
<dbReference type="EMBL" id="BX640450">
    <property type="protein sequence ID" value="CAE34814.1"/>
    <property type="molecule type" value="Genomic_DNA"/>
</dbReference>
<dbReference type="RefSeq" id="WP_003817642.1">
    <property type="nucleotide sequence ID" value="NC_002927.3"/>
</dbReference>
<dbReference type="SMR" id="Q7WF29"/>
<dbReference type="GeneID" id="56477050"/>
<dbReference type="KEGG" id="bbr:BB4451"/>
<dbReference type="eggNOG" id="COG1871">
    <property type="taxonomic scope" value="Bacteria"/>
</dbReference>
<dbReference type="HOGENOM" id="CLU_087854_0_0_4"/>
<dbReference type="Proteomes" id="UP000001027">
    <property type="component" value="Chromosome"/>
</dbReference>
<dbReference type="GO" id="GO:0050568">
    <property type="term" value="F:protein-glutamine glutaminase activity"/>
    <property type="evidence" value="ECO:0007669"/>
    <property type="project" value="UniProtKB-UniRule"/>
</dbReference>
<dbReference type="GO" id="GO:0006935">
    <property type="term" value="P:chemotaxis"/>
    <property type="evidence" value="ECO:0007669"/>
    <property type="project" value="UniProtKB-UniRule"/>
</dbReference>
<dbReference type="CDD" id="cd16352">
    <property type="entry name" value="CheD"/>
    <property type="match status" value="1"/>
</dbReference>
<dbReference type="Gene3D" id="3.30.1330.200">
    <property type="match status" value="1"/>
</dbReference>
<dbReference type="HAMAP" id="MF_01440">
    <property type="entry name" value="CheD"/>
    <property type="match status" value="1"/>
</dbReference>
<dbReference type="InterPro" id="IPR038592">
    <property type="entry name" value="CheD-like_sf"/>
</dbReference>
<dbReference type="InterPro" id="IPR005659">
    <property type="entry name" value="Chemorcpt_Glu_NH3ase_CheD"/>
</dbReference>
<dbReference type="InterPro" id="IPR011324">
    <property type="entry name" value="Cytotoxic_necrot_fac-like_cat"/>
</dbReference>
<dbReference type="NCBIfam" id="NF010013">
    <property type="entry name" value="PRK13487.1"/>
    <property type="match status" value="1"/>
</dbReference>
<dbReference type="NCBIfam" id="NF010014">
    <property type="entry name" value="PRK13489.1"/>
    <property type="match status" value="1"/>
</dbReference>
<dbReference type="PANTHER" id="PTHR35147">
    <property type="entry name" value="CHEMORECEPTOR GLUTAMINE DEAMIDASE CHED-RELATED"/>
    <property type="match status" value="1"/>
</dbReference>
<dbReference type="PANTHER" id="PTHR35147:SF2">
    <property type="entry name" value="CHEMORECEPTOR GLUTAMINE DEAMIDASE CHED-RELATED"/>
    <property type="match status" value="1"/>
</dbReference>
<dbReference type="Pfam" id="PF03975">
    <property type="entry name" value="CheD"/>
    <property type="match status" value="1"/>
</dbReference>
<dbReference type="SUPFAM" id="SSF64438">
    <property type="entry name" value="CNF1/YfiH-like putative cysteine hydrolases"/>
    <property type="match status" value="1"/>
</dbReference>
<accession>Q7WF29</accession>
<protein>
    <recommendedName>
        <fullName evidence="1">Probable chemoreceptor glutamine deamidase CheD</fullName>
        <ecNumber evidence="1">3.5.1.44</ecNumber>
    </recommendedName>
</protein>
<reference key="1">
    <citation type="journal article" date="2003" name="Nat. Genet.">
        <title>Comparative analysis of the genome sequences of Bordetella pertussis, Bordetella parapertussis and Bordetella bronchiseptica.</title>
        <authorList>
            <person name="Parkhill J."/>
            <person name="Sebaihia M."/>
            <person name="Preston A."/>
            <person name="Murphy L.D."/>
            <person name="Thomson N.R."/>
            <person name="Harris D.E."/>
            <person name="Holden M.T.G."/>
            <person name="Churcher C.M."/>
            <person name="Bentley S.D."/>
            <person name="Mungall K.L."/>
            <person name="Cerdeno-Tarraga A.-M."/>
            <person name="Temple L."/>
            <person name="James K.D."/>
            <person name="Harris B."/>
            <person name="Quail M.A."/>
            <person name="Achtman M."/>
            <person name="Atkin R."/>
            <person name="Baker S."/>
            <person name="Basham D."/>
            <person name="Bason N."/>
            <person name="Cherevach I."/>
            <person name="Chillingworth T."/>
            <person name="Collins M."/>
            <person name="Cronin A."/>
            <person name="Davis P."/>
            <person name="Doggett J."/>
            <person name="Feltwell T."/>
            <person name="Goble A."/>
            <person name="Hamlin N."/>
            <person name="Hauser H."/>
            <person name="Holroyd S."/>
            <person name="Jagels K."/>
            <person name="Leather S."/>
            <person name="Moule S."/>
            <person name="Norberczak H."/>
            <person name="O'Neil S."/>
            <person name="Ormond D."/>
            <person name="Price C."/>
            <person name="Rabbinowitsch E."/>
            <person name="Rutter S."/>
            <person name="Sanders M."/>
            <person name="Saunders D."/>
            <person name="Seeger K."/>
            <person name="Sharp S."/>
            <person name="Simmonds M."/>
            <person name="Skelton J."/>
            <person name="Squares R."/>
            <person name="Squares S."/>
            <person name="Stevens K."/>
            <person name="Unwin L."/>
            <person name="Whitehead S."/>
            <person name="Barrell B.G."/>
            <person name="Maskell D.J."/>
        </authorList>
    </citation>
    <scope>NUCLEOTIDE SEQUENCE [LARGE SCALE GENOMIC DNA]</scope>
    <source>
        <strain>ATCC BAA-588 / NCTC 13252 / RB50</strain>
    </source>
</reference>
<name>CHED_BORBR</name>
<proteinExistence type="inferred from homology"/>